<accession>Q57JG1</accession>
<proteinExistence type="inferred from homology"/>
<evidence type="ECO:0000255" key="1">
    <source>
        <dbReference type="HAMAP-Rule" id="MF_00111"/>
    </source>
</evidence>
<name>MURA_SALCH</name>
<organism>
    <name type="scientific">Salmonella choleraesuis (strain SC-B67)</name>
    <dbReference type="NCBI Taxonomy" id="321314"/>
    <lineage>
        <taxon>Bacteria</taxon>
        <taxon>Pseudomonadati</taxon>
        <taxon>Pseudomonadota</taxon>
        <taxon>Gammaproteobacteria</taxon>
        <taxon>Enterobacterales</taxon>
        <taxon>Enterobacteriaceae</taxon>
        <taxon>Salmonella</taxon>
    </lineage>
</organism>
<keyword id="KW-0131">Cell cycle</keyword>
<keyword id="KW-0132">Cell division</keyword>
<keyword id="KW-0133">Cell shape</keyword>
<keyword id="KW-0961">Cell wall biogenesis/degradation</keyword>
<keyword id="KW-0963">Cytoplasm</keyword>
<keyword id="KW-0573">Peptidoglycan synthesis</keyword>
<keyword id="KW-0670">Pyruvate</keyword>
<keyword id="KW-0808">Transferase</keyword>
<comment type="function">
    <text evidence="1">Cell wall formation. Adds enolpyruvyl to UDP-N-acetylglucosamine.</text>
</comment>
<comment type="catalytic activity">
    <reaction evidence="1">
        <text>phosphoenolpyruvate + UDP-N-acetyl-alpha-D-glucosamine = UDP-N-acetyl-3-O-(1-carboxyvinyl)-alpha-D-glucosamine + phosphate</text>
        <dbReference type="Rhea" id="RHEA:18681"/>
        <dbReference type="ChEBI" id="CHEBI:43474"/>
        <dbReference type="ChEBI" id="CHEBI:57705"/>
        <dbReference type="ChEBI" id="CHEBI:58702"/>
        <dbReference type="ChEBI" id="CHEBI:68483"/>
        <dbReference type="EC" id="2.5.1.7"/>
    </reaction>
</comment>
<comment type="pathway">
    <text evidence="1">Cell wall biogenesis; peptidoglycan biosynthesis.</text>
</comment>
<comment type="subcellular location">
    <subcellularLocation>
        <location evidence="1">Cytoplasm</location>
    </subcellularLocation>
</comment>
<comment type="similarity">
    <text evidence="1">Belongs to the EPSP synthase family. MurA subfamily.</text>
</comment>
<reference key="1">
    <citation type="journal article" date="2005" name="Nucleic Acids Res.">
        <title>The genome sequence of Salmonella enterica serovar Choleraesuis, a highly invasive and resistant zoonotic pathogen.</title>
        <authorList>
            <person name="Chiu C.-H."/>
            <person name="Tang P."/>
            <person name="Chu C."/>
            <person name="Hu S."/>
            <person name="Bao Q."/>
            <person name="Yu J."/>
            <person name="Chou Y.-Y."/>
            <person name="Wang H.-S."/>
            <person name="Lee Y.-S."/>
        </authorList>
    </citation>
    <scope>NUCLEOTIDE SEQUENCE [LARGE SCALE GENOMIC DNA]</scope>
    <source>
        <strain>SC-B67</strain>
    </source>
</reference>
<feature type="chain" id="PRO_0000231258" description="UDP-N-acetylglucosamine 1-carboxyvinyltransferase">
    <location>
        <begin position="1"/>
        <end position="419"/>
    </location>
</feature>
<feature type="active site" description="Proton donor" evidence="1">
    <location>
        <position position="115"/>
    </location>
</feature>
<feature type="binding site" evidence="1">
    <location>
        <begin position="22"/>
        <end position="23"/>
    </location>
    <ligand>
        <name>phosphoenolpyruvate</name>
        <dbReference type="ChEBI" id="CHEBI:58702"/>
    </ligand>
</feature>
<feature type="binding site" evidence="1">
    <location>
        <position position="91"/>
    </location>
    <ligand>
        <name>UDP-N-acetyl-alpha-D-glucosamine</name>
        <dbReference type="ChEBI" id="CHEBI:57705"/>
    </ligand>
</feature>
<feature type="binding site" evidence="1">
    <location>
        <begin position="120"/>
        <end position="124"/>
    </location>
    <ligand>
        <name>UDP-N-acetyl-alpha-D-glucosamine</name>
        <dbReference type="ChEBI" id="CHEBI:57705"/>
    </ligand>
</feature>
<feature type="binding site" evidence="1">
    <location>
        <begin position="160"/>
        <end position="163"/>
    </location>
    <ligand>
        <name>UDP-N-acetyl-alpha-D-glucosamine</name>
        <dbReference type="ChEBI" id="CHEBI:57705"/>
    </ligand>
</feature>
<feature type="binding site" evidence="1">
    <location>
        <position position="305"/>
    </location>
    <ligand>
        <name>UDP-N-acetyl-alpha-D-glucosamine</name>
        <dbReference type="ChEBI" id="CHEBI:57705"/>
    </ligand>
</feature>
<feature type="binding site" evidence="1">
    <location>
        <position position="327"/>
    </location>
    <ligand>
        <name>UDP-N-acetyl-alpha-D-glucosamine</name>
        <dbReference type="ChEBI" id="CHEBI:57705"/>
    </ligand>
</feature>
<feature type="modified residue" description="2-(S-cysteinyl)pyruvic acid O-phosphothioketal" evidence="1">
    <location>
        <position position="115"/>
    </location>
</feature>
<dbReference type="EC" id="2.5.1.7" evidence="1"/>
<dbReference type="EMBL" id="AE017220">
    <property type="protein sequence ID" value="AAX67151.1"/>
    <property type="molecule type" value="Genomic_DNA"/>
</dbReference>
<dbReference type="RefSeq" id="WP_000357288.1">
    <property type="nucleotide sequence ID" value="NC_006905.1"/>
</dbReference>
<dbReference type="SMR" id="Q57JG1"/>
<dbReference type="KEGG" id="sec:SCH_3245"/>
<dbReference type="HOGENOM" id="CLU_027387_0_0_6"/>
<dbReference type="UniPathway" id="UPA00219"/>
<dbReference type="Proteomes" id="UP000000538">
    <property type="component" value="Chromosome"/>
</dbReference>
<dbReference type="GO" id="GO:0005737">
    <property type="term" value="C:cytoplasm"/>
    <property type="evidence" value="ECO:0007669"/>
    <property type="project" value="UniProtKB-SubCell"/>
</dbReference>
<dbReference type="GO" id="GO:0008760">
    <property type="term" value="F:UDP-N-acetylglucosamine 1-carboxyvinyltransferase activity"/>
    <property type="evidence" value="ECO:0007669"/>
    <property type="project" value="UniProtKB-UniRule"/>
</dbReference>
<dbReference type="GO" id="GO:0051301">
    <property type="term" value="P:cell division"/>
    <property type="evidence" value="ECO:0007669"/>
    <property type="project" value="UniProtKB-KW"/>
</dbReference>
<dbReference type="GO" id="GO:0071555">
    <property type="term" value="P:cell wall organization"/>
    <property type="evidence" value="ECO:0007669"/>
    <property type="project" value="UniProtKB-KW"/>
</dbReference>
<dbReference type="GO" id="GO:0009252">
    <property type="term" value="P:peptidoglycan biosynthetic process"/>
    <property type="evidence" value="ECO:0007669"/>
    <property type="project" value="UniProtKB-UniRule"/>
</dbReference>
<dbReference type="GO" id="GO:0008360">
    <property type="term" value="P:regulation of cell shape"/>
    <property type="evidence" value="ECO:0007669"/>
    <property type="project" value="UniProtKB-KW"/>
</dbReference>
<dbReference type="GO" id="GO:0019277">
    <property type="term" value="P:UDP-N-acetylgalactosamine biosynthetic process"/>
    <property type="evidence" value="ECO:0007669"/>
    <property type="project" value="InterPro"/>
</dbReference>
<dbReference type="CDD" id="cd01555">
    <property type="entry name" value="UdpNAET"/>
    <property type="match status" value="1"/>
</dbReference>
<dbReference type="FunFam" id="3.65.10.10:FF:000002">
    <property type="entry name" value="UDP-N-acetylglucosamine 1-carboxyvinyltransferase"/>
    <property type="match status" value="1"/>
</dbReference>
<dbReference type="Gene3D" id="3.65.10.10">
    <property type="entry name" value="Enolpyruvate transferase domain"/>
    <property type="match status" value="2"/>
</dbReference>
<dbReference type="HAMAP" id="MF_00111">
    <property type="entry name" value="MurA"/>
    <property type="match status" value="1"/>
</dbReference>
<dbReference type="InterPro" id="IPR001986">
    <property type="entry name" value="Enolpyruvate_Tfrase_dom"/>
</dbReference>
<dbReference type="InterPro" id="IPR036968">
    <property type="entry name" value="Enolpyruvate_Tfrase_sf"/>
</dbReference>
<dbReference type="InterPro" id="IPR050068">
    <property type="entry name" value="MurA_subfamily"/>
</dbReference>
<dbReference type="InterPro" id="IPR013792">
    <property type="entry name" value="RNA3'P_cycl/enolpyr_Trfase_a/b"/>
</dbReference>
<dbReference type="InterPro" id="IPR005750">
    <property type="entry name" value="UDP_GlcNAc_COvinyl_MurA"/>
</dbReference>
<dbReference type="NCBIfam" id="TIGR01072">
    <property type="entry name" value="murA"/>
    <property type="match status" value="1"/>
</dbReference>
<dbReference type="NCBIfam" id="NF006873">
    <property type="entry name" value="PRK09369.1"/>
    <property type="match status" value="1"/>
</dbReference>
<dbReference type="PANTHER" id="PTHR43783">
    <property type="entry name" value="UDP-N-ACETYLGLUCOSAMINE 1-CARBOXYVINYLTRANSFERASE"/>
    <property type="match status" value="1"/>
</dbReference>
<dbReference type="PANTHER" id="PTHR43783:SF1">
    <property type="entry name" value="UDP-N-ACETYLGLUCOSAMINE 1-CARBOXYVINYLTRANSFERASE"/>
    <property type="match status" value="1"/>
</dbReference>
<dbReference type="Pfam" id="PF00275">
    <property type="entry name" value="EPSP_synthase"/>
    <property type="match status" value="1"/>
</dbReference>
<dbReference type="SUPFAM" id="SSF55205">
    <property type="entry name" value="EPT/RTPC-like"/>
    <property type="match status" value="1"/>
</dbReference>
<sequence>MDKFRVQGPTTLQGEVTISGAKNAALPILFAALLAEEPVEIQNVPKLKDVDTSMKLLSQLGAKVERNGSVHIDASQVNVFCAPYDLVKTMRASIWALGPLVARFGQGQVSLPGGCTIGARPVDLHITGLEQLGATIKLEEGYVKASVEGRLKGAHIVMDKVSVGATVTIMCAATLAEGTTIIENAAREPEIVDTANFLVTLGAKIAGQGTDRITIEGVERLGGGVYRVLPDRIETGTFLVAAAISRGKILCRNAQPDTLDAVLAKLRDAGADIEVGEDWISLDMHGKRPKAVNVRTAPHPAFPTDMQAQFTLLNLVAEGTGFITETVFENRFMHVPELSRMGARAEIESNTVICHGVETLSGAQVMATDLRASASLVLAGCIAEGTTIVDRIYHIDRGYERIEDKLRALGANIERVKGE</sequence>
<protein>
    <recommendedName>
        <fullName evidence="1">UDP-N-acetylglucosamine 1-carboxyvinyltransferase</fullName>
        <ecNumber evidence="1">2.5.1.7</ecNumber>
    </recommendedName>
    <alternativeName>
        <fullName evidence="1">Enoylpyruvate transferase</fullName>
    </alternativeName>
    <alternativeName>
        <fullName evidence="1">UDP-N-acetylglucosamine enolpyruvyl transferase</fullName>
        <shortName evidence="1">EPT</shortName>
    </alternativeName>
</protein>
<gene>
    <name evidence="1" type="primary">murA</name>
    <name type="ordered locus">SCH_3245</name>
</gene>